<sequence length="624" mass="69871">MYAYNGKLLDVDLTREKVKEVELSEDVLKKFYGGRGLGTYILWKELGEKWEKVDPLGEENLLLILTGPLTGYYPGMKTSIVSKSPESNGVVGSVLSSELGLELKAAGYDGIIIRGKAKSPVYLFIHNDTVEIRDATKYWGMGGIELYKTLLKEVHEEIRKKEKLKGVPKEPAMIYIGKGGENKVRFAAIMTKLMHAAGYGGYGAVMGSKNLKAVIAKGSGPLPEVYDKEKMKVLLREFWKELFSMTTFREWGTGAGGYSVGHDRSSEPIRNWQEEYHDNEEISVVNFENRTWIKKYWADYGCPVNCMKISYLRYGPYKGSISDAPDYELQAYMGTNLGIFEPEKIVYLSYLVDELGLDGINTGNILGFAAELYQRGILTKEDLGFELNWGDEKAFAKLLHLIVEKEGIGKILAEGTYRAALKISEIKGIDVTKYAVHVKGIAVGAHGIRSELDYTKDISYAVSVQGGDHTSTAALPAKGYTGELVEAFYDSAVICNFVTKPGFEKIIEFGNALSGFNITPEQWLNEIGLRIIHLQRILLLLGGPDVYWDPRKDDDNPPRFYEPLPSGPVKGKAPNREDIKAKVKQYYEEIGYDEHGIPKEEVLEELGIGEAKREVKRIKKRLNL</sequence>
<keyword id="KW-0002">3D-structure</keyword>
<keyword id="KW-0004">4Fe-4S</keyword>
<keyword id="KW-0963">Cytoplasm</keyword>
<keyword id="KW-0903">Direct protein sequencing</keyword>
<keyword id="KW-0408">Iron</keyword>
<keyword id="KW-0411">Iron-sulfur</keyword>
<keyword id="KW-0479">Metal-binding</keyword>
<keyword id="KW-0560">Oxidoreductase</keyword>
<keyword id="KW-1185">Reference proteome</keyword>
<keyword id="KW-0826">Tungsten</keyword>
<evidence type="ECO:0000256" key="1">
    <source>
        <dbReference type="SAM" id="MobiDB-lite"/>
    </source>
</evidence>
<evidence type="ECO:0000269" key="2">
    <source>
    </source>
</evidence>
<evidence type="ECO:0000269" key="3">
    <source>
    </source>
</evidence>
<evidence type="ECO:0000303" key="4">
    <source>
    </source>
</evidence>
<evidence type="ECO:0000303" key="5">
    <source>
    </source>
</evidence>
<evidence type="ECO:0000305" key="6"/>
<evidence type="ECO:0000312" key="7">
    <source>
        <dbReference type="EMBL" id="AAL81604.1"/>
    </source>
</evidence>
<evidence type="ECO:0000312" key="8">
    <source>
        <dbReference type="EMBL" id="QEK79109.1"/>
    </source>
</evidence>
<evidence type="ECO:0007744" key="9">
    <source>
        <dbReference type="PDB" id="6X1O"/>
    </source>
</evidence>
<evidence type="ECO:0007744" key="10">
    <source>
        <dbReference type="PDB" id="6X6U"/>
    </source>
</evidence>
<organism>
    <name type="scientific">Pyrococcus furiosus (strain ATCC 43587 / DSM 3638 / JCM 8422 / Vc1)</name>
    <dbReference type="NCBI Taxonomy" id="186497"/>
    <lineage>
        <taxon>Archaea</taxon>
        <taxon>Methanobacteriati</taxon>
        <taxon>Methanobacteriota</taxon>
        <taxon>Thermococci</taxon>
        <taxon>Thermococcales</taxon>
        <taxon>Thermococcaceae</taxon>
        <taxon>Pyrococcus</taxon>
    </lineage>
</organism>
<proteinExistence type="evidence at protein level"/>
<reference evidence="7" key="1">
    <citation type="journal article" date="1999" name="Genetics">
        <title>Divergence of the hyperthermophilic archaea Pyrococcus furiosus and P. horikoshii inferred from complete genomic sequences.</title>
        <authorList>
            <person name="Maeder D.L."/>
            <person name="Weiss R.B."/>
            <person name="Dunn D.M."/>
            <person name="Cherry J.L."/>
            <person name="Gonzalez J.M."/>
            <person name="DiRuggiero J."/>
            <person name="Robb F.T."/>
        </authorList>
    </citation>
    <scope>NUCLEOTIDE SEQUENCE [LARGE SCALE GENOMIC DNA]</scope>
    <source>
        <strain>ATCC 43587 / DSM 3638 / JCM 8422 / Vc1</strain>
    </source>
</reference>
<reference evidence="8" key="2">
    <citation type="submission" date="2017-08" db="EMBL/GenBank/DDBJ databases">
        <title>Resequencing and Reannotation of the genome of Pyrococcus furiosus type strain DSM3638.</title>
        <authorList>
            <person name="Reichelt R.M."/>
            <person name="Bunk B."/>
        </authorList>
    </citation>
    <scope>NUCLEOTIDE SEQUENCE [LARGE SCALE GENOMIC DNA]</scope>
    <source>
        <strain>ATCC 43587 / DSM 3638 / JCM 8422 / Vc1</strain>
    </source>
</reference>
<reference key="3">
    <citation type="journal article" date="2005" name="J. Bacteriol.">
        <title>WOR5, a novel tungsten-containing aldehyde oxidoreductase from Pyrococcus furiosus with a broad substrate specificity.</title>
        <authorList>
            <person name="Bevers L.E."/>
            <person name="Bol E."/>
            <person name="Hagedoorn P.L."/>
            <person name="Hagen W.R."/>
        </authorList>
    </citation>
    <scope>PROTEIN SEQUENCE OF 1-21</scope>
    <scope>FUNCTION AS AN ALDEHYDE OXIDOREDUCTASE</scope>
    <scope>COFACTOR</scope>
    <scope>BIOPHYSICOCHEMICAL PROPERTIES</scope>
    <source>
        <strain>ATCC 43587 / DSM 3638 / JCM 8422 / Vc1</strain>
    </source>
</reference>
<reference evidence="9 10" key="4">
    <citation type="journal article" date="2022" name="J. Biol. Inorg. Chem.">
        <title>An unprecedented function for a tungsten-containing oxidoreductase.</title>
        <authorList>
            <person name="Mathew L.G."/>
            <person name="Haja D.K."/>
            <person name="Pritchett C."/>
            <person name="McCormick W."/>
            <person name="Zeineddine R."/>
            <person name="Fontenot L.S."/>
            <person name="Rivera M.E."/>
            <person name="Glushka J."/>
            <person name="Adams M.W.W."/>
            <person name="Lanzilotta W.N."/>
        </authorList>
    </citation>
    <scope>X-RAY CRYSTALLOGRAPHY (1.94 ANGSTROMS) OF 1-623 IN COMPLEX WITH IRON-SULFUR (4FE-4S) CLUSTER AND TUNGSTOPTERIN</scope>
    <scope>FUNCTION</scope>
    <scope>CATALYTIC ACTIVITY</scope>
    <scope>COFACTOR</scope>
    <scope>BIOPHYSICOCHEMICAL PROPERTIES</scope>
    <scope>SUBUNIT</scope>
    <scope>SUBCELLULAR LOCATION</scope>
    <source>
        <strain>COM1</strain>
    </source>
</reference>
<protein>
    <recommendedName>
        <fullName evidence="6">Aliphatic sulfonate oxidoreductase, WOR-like subunit</fullName>
        <ecNumber evidence="2 3">1.97.1.13</ecNumber>
    </recommendedName>
    <alternativeName>
        <fullName evidence="5">Aliphatic sulfonate ferredoxin oxidoreductase</fullName>
        <shortName evidence="5">ASOR</shortName>
    </alternativeName>
    <alternativeName>
        <fullName evidence="4">Tungsten-containing aldehyde oxidoreductase</fullName>
    </alternativeName>
    <alternativeName>
        <fullName evidence="4">WOR5</fullName>
    </alternativeName>
    <alternativeName>
        <fullName evidence="5">WOR5 large subunit</fullName>
        <shortName evidence="5">WOR5-L</shortName>
    </alternativeName>
</protein>
<dbReference type="EC" id="1.97.1.13" evidence="2 3"/>
<dbReference type="EMBL" id="AE009950">
    <property type="protein sequence ID" value="AAL81604.1"/>
    <property type="status" value="ALT_FRAME"/>
    <property type="molecule type" value="Genomic_DNA"/>
</dbReference>
<dbReference type="EMBL" id="CP023154">
    <property type="protein sequence ID" value="QEK79109.1"/>
    <property type="molecule type" value="Genomic_DNA"/>
</dbReference>
<dbReference type="RefSeq" id="WP_014835423.1">
    <property type="nucleotide sequence ID" value="NZ_CP023154.1"/>
</dbReference>
<dbReference type="PDB" id="6X1O">
    <property type="method" value="X-ray"/>
    <property type="resolution" value="2.09 A"/>
    <property type="chains" value="A/C=1-624"/>
</dbReference>
<dbReference type="PDB" id="6X6U">
    <property type="method" value="X-ray"/>
    <property type="resolution" value="1.94 A"/>
    <property type="chains" value="A/C=1-623"/>
</dbReference>
<dbReference type="PDBsum" id="6X1O"/>
<dbReference type="PDBsum" id="6X6U"/>
<dbReference type="SMR" id="E7FHH1"/>
<dbReference type="STRING" id="186497.PF1480"/>
<dbReference type="PaxDb" id="186497-PF1480"/>
<dbReference type="GeneID" id="41713292"/>
<dbReference type="KEGG" id="pfu:PF1480"/>
<dbReference type="PATRIC" id="fig|186497.12.peg.1543"/>
<dbReference type="eggNOG" id="arCOG00709">
    <property type="taxonomic scope" value="Archaea"/>
</dbReference>
<dbReference type="HOGENOM" id="CLU_020364_1_0_2"/>
<dbReference type="PhylomeDB" id="E7FHH1"/>
<dbReference type="Proteomes" id="UP000001013">
    <property type="component" value="Chromosome"/>
</dbReference>
<dbReference type="Proteomes" id="UP000324354">
    <property type="component" value="Chromosome"/>
</dbReference>
<dbReference type="GO" id="GO:0005737">
    <property type="term" value="C:cytoplasm"/>
    <property type="evidence" value="ECO:0007669"/>
    <property type="project" value="UniProtKB-SubCell"/>
</dbReference>
<dbReference type="GO" id="GO:0051539">
    <property type="term" value="F:4 iron, 4 sulfur cluster binding"/>
    <property type="evidence" value="ECO:0007669"/>
    <property type="project" value="UniProtKB-KW"/>
</dbReference>
<dbReference type="GO" id="GO:0033726">
    <property type="term" value="F:aldehyde ferredoxin oxidoreductase activity"/>
    <property type="evidence" value="ECO:0007669"/>
    <property type="project" value="UniProtKB-EC"/>
</dbReference>
<dbReference type="GO" id="GO:0009055">
    <property type="term" value="F:electron transfer activity"/>
    <property type="evidence" value="ECO:0007669"/>
    <property type="project" value="InterPro"/>
</dbReference>
<dbReference type="GO" id="GO:0046872">
    <property type="term" value="F:metal ion binding"/>
    <property type="evidence" value="ECO:0007669"/>
    <property type="project" value="UniProtKB-KW"/>
</dbReference>
<dbReference type="Gene3D" id="1.10.569.10">
    <property type="entry name" value="Aldehyde Ferredoxin Oxidoreductase Protein, subunit A, domain 2"/>
    <property type="match status" value="1"/>
</dbReference>
<dbReference type="Gene3D" id="1.10.599.10">
    <property type="entry name" value="Aldehyde Ferredoxin Oxidoreductase Protein, subunit A, domain 3"/>
    <property type="match status" value="1"/>
</dbReference>
<dbReference type="Gene3D" id="3.60.9.10">
    <property type="entry name" value="Aldehyde ferredoxin oxidoreductase, N-terminal domain"/>
    <property type="match status" value="1"/>
</dbReference>
<dbReference type="InterPro" id="IPR013984">
    <property type="entry name" value="Ald_Fedxn_OxRdtase_dom2"/>
</dbReference>
<dbReference type="InterPro" id="IPR013985">
    <property type="entry name" value="Ald_Fedxn_OxRdtase_dom3"/>
</dbReference>
<dbReference type="InterPro" id="IPR013983">
    <property type="entry name" value="Ald_Fedxn_OxRdtase_N"/>
</dbReference>
<dbReference type="InterPro" id="IPR036503">
    <property type="entry name" value="Ald_Fedxn_OxRdtase_N_sf"/>
</dbReference>
<dbReference type="InterPro" id="IPR001203">
    <property type="entry name" value="OxRdtase_Ald_Fedxn_C"/>
</dbReference>
<dbReference type="InterPro" id="IPR036021">
    <property type="entry name" value="Tungsten_al_ferr_oxy-like_C"/>
</dbReference>
<dbReference type="InterPro" id="IPR051919">
    <property type="entry name" value="W-dependent_AOR"/>
</dbReference>
<dbReference type="PANTHER" id="PTHR30038">
    <property type="entry name" value="ALDEHYDE FERREDOXIN OXIDOREDUCTASE"/>
    <property type="match status" value="1"/>
</dbReference>
<dbReference type="PANTHER" id="PTHR30038:SF0">
    <property type="entry name" value="TUNGSTEN-CONTAINING ALDEHYDE FERREDOXIN OXIDOREDUCTASE"/>
    <property type="match status" value="1"/>
</dbReference>
<dbReference type="Pfam" id="PF01314">
    <property type="entry name" value="AFOR_C"/>
    <property type="match status" value="1"/>
</dbReference>
<dbReference type="Pfam" id="PF02730">
    <property type="entry name" value="AFOR_N"/>
    <property type="match status" value="1"/>
</dbReference>
<dbReference type="SMART" id="SM00790">
    <property type="entry name" value="AFOR_N"/>
    <property type="match status" value="1"/>
</dbReference>
<dbReference type="SUPFAM" id="SSF48310">
    <property type="entry name" value="Aldehyde ferredoxin oxidoreductase, C-terminal domains"/>
    <property type="match status" value="1"/>
</dbReference>
<dbReference type="SUPFAM" id="SSF56228">
    <property type="entry name" value="Aldehyde ferredoxin oxidoreductase, N-terminal domain"/>
    <property type="match status" value="1"/>
</dbReference>
<feature type="chain" id="PRO_0000461705" description="Aliphatic sulfonate oxidoreductase, WOR-like subunit">
    <location>
        <begin position="1"/>
        <end position="624"/>
    </location>
</feature>
<feature type="region of interest" description="Disordered" evidence="1">
    <location>
        <begin position="552"/>
        <end position="575"/>
    </location>
</feature>
<feature type="binding site" evidence="9 10">
    <location>
        <position position="77"/>
    </location>
    <ligand>
        <name>tungstopterin</name>
        <dbReference type="ChEBI" id="CHEBI:30402"/>
    </ligand>
</feature>
<feature type="binding site" evidence="9 10">
    <location>
        <position position="93"/>
    </location>
    <ligand>
        <name>tungstopterin</name>
        <dbReference type="ChEBI" id="CHEBI:30402"/>
    </ligand>
</feature>
<feature type="binding site" evidence="9 10">
    <location>
        <position position="94"/>
    </location>
    <ligand>
        <name>tungstopterin</name>
        <dbReference type="ChEBI" id="CHEBI:30402"/>
    </ligand>
</feature>
<feature type="binding site" evidence="9 10">
    <location>
        <position position="96"/>
    </location>
    <ligand>
        <name>tungstopterin</name>
        <dbReference type="ChEBI" id="CHEBI:30402"/>
    </ligand>
</feature>
<feature type="binding site" evidence="9 10">
    <location>
        <position position="195"/>
    </location>
    <ligand>
        <name>tungstopterin</name>
        <dbReference type="ChEBI" id="CHEBI:30402"/>
    </ligand>
</feature>
<feature type="binding site" evidence="9 10">
    <location>
        <position position="196"/>
    </location>
    <ligand>
        <name>tungstopterin</name>
        <dbReference type="ChEBI" id="CHEBI:30402"/>
    </ligand>
</feature>
<feature type="binding site" evidence="9 10">
    <location>
        <position position="198"/>
    </location>
    <ligand>
        <name>tungstopterin</name>
        <dbReference type="ChEBI" id="CHEBI:30402"/>
    </ligand>
</feature>
<feature type="binding site" evidence="9 10">
    <location>
        <position position="199"/>
    </location>
    <ligand>
        <name>tungstopterin</name>
        <dbReference type="ChEBI" id="CHEBI:30402"/>
    </ligand>
</feature>
<feature type="binding site" evidence="3 9 10">
    <location>
        <position position="299"/>
    </location>
    <ligand>
        <name>[4Fe-4S] cluster</name>
        <dbReference type="ChEBI" id="CHEBI:49883"/>
    </ligand>
</feature>
<feature type="binding site" evidence="3 9 10">
    <location>
        <position position="302"/>
    </location>
    <ligand>
        <name>[4Fe-4S] cluster</name>
        <dbReference type="ChEBI" id="CHEBI:49883"/>
    </ligand>
</feature>
<feature type="binding site" evidence="3 9 10">
    <location>
        <position position="306"/>
    </location>
    <ligand>
        <name>[4Fe-4S] cluster</name>
        <dbReference type="ChEBI" id="CHEBI:49883"/>
    </ligand>
</feature>
<feature type="binding site" evidence="9 10">
    <location>
        <position position="353"/>
    </location>
    <ligand>
        <name>tungstopterin</name>
        <dbReference type="ChEBI" id="CHEBI:30402"/>
    </ligand>
</feature>
<feature type="binding site" evidence="9 10">
    <location>
        <position position="357"/>
    </location>
    <ligand>
        <name>tungstopterin</name>
        <dbReference type="ChEBI" id="CHEBI:30402"/>
    </ligand>
</feature>
<feature type="binding site" evidence="9 10">
    <location>
        <position position="358"/>
    </location>
    <ligand>
        <name>tungstopterin</name>
        <dbReference type="ChEBI" id="CHEBI:30402"/>
    </ligand>
</feature>
<feature type="binding site" evidence="9 10">
    <location>
        <position position="359"/>
    </location>
    <ligand>
        <name>tungstopterin</name>
        <dbReference type="ChEBI" id="CHEBI:30402"/>
    </ligand>
</feature>
<feature type="binding site" evidence="9 10">
    <location>
        <position position="470"/>
    </location>
    <ligand>
        <name>tungstopterin</name>
        <dbReference type="ChEBI" id="CHEBI:30402"/>
    </ligand>
</feature>
<feature type="binding site" evidence="9 10">
    <location>
        <position position="490"/>
    </location>
    <ligand>
        <name>tungstopterin</name>
        <dbReference type="ChEBI" id="CHEBI:30402"/>
    </ligand>
</feature>
<feature type="binding site" evidence="9 10">
    <location>
        <position position="494"/>
    </location>
    <ligand>
        <name>tungstopterin</name>
        <dbReference type="ChEBI" id="CHEBI:30402"/>
    </ligand>
</feature>
<feature type="binding site" evidence="3 9 10">
    <location>
        <position position="495"/>
    </location>
    <ligand>
        <name>[4Fe-4S] cluster</name>
        <dbReference type="ChEBI" id="CHEBI:49883"/>
    </ligand>
</feature>
<feature type="binding site" evidence="9 10">
    <location>
        <position position="495"/>
    </location>
    <ligand>
        <name>tungstopterin</name>
        <dbReference type="ChEBI" id="CHEBI:30402"/>
    </ligand>
</feature>
<feature type="binding site" evidence="9 10">
    <location>
        <position position="496"/>
    </location>
    <ligand>
        <name>tungstopterin</name>
        <dbReference type="ChEBI" id="CHEBI:30402"/>
    </ligand>
</feature>
<comment type="function">
    <text evidence="2 3">WOR-like catalytic subunit of an oxidoreductase that can desulfonate and oxidize aliphatic sulfonates such as taurine (PubMed:36269456). The activity involves two steps: an oxidative desulfonation reaction, followed by the activation of a second water molecule and oxidation of the resulting aldehyde (PubMed:36269456). May be involved in the oxidation of various aliphatic sulfonates and also phosphonates (PubMed:36269456). In vitro, has a broad substrate specificity with a high affinity for several substituted and nonsubstituted aliphatic and aromatic aldehydes with various chain lengths, with methyl viologen or benzyl viologen as electron acceptor (PubMed:16199576, PubMed:36269456). Ferredoxin is the physiological electron acceptor (PubMed:36269456).</text>
</comment>
<comment type="catalytic activity">
    <reaction evidence="2 3">
        <text>an aliphatic sulfonate + 4 oxidized [4Fe-4S]-[ferredoxin] + 2 H2O = 4 reduced [4Fe-4S]-[ferredoxin] + a carboxylate + sulfite + 6 H(+)</text>
        <dbReference type="Rhea" id="RHEA:80643"/>
        <dbReference type="Rhea" id="RHEA-COMP:18797"/>
        <dbReference type="Rhea" id="RHEA-COMP:18798"/>
        <dbReference type="ChEBI" id="CHEBI:15377"/>
        <dbReference type="ChEBI" id="CHEBI:15378"/>
        <dbReference type="ChEBI" id="CHEBI:17359"/>
        <dbReference type="ChEBI" id="CHEBI:29067"/>
        <dbReference type="ChEBI" id="CHEBI:33722"/>
        <dbReference type="ChEBI" id="CHEBI:33723"/>
        <dbReference type="ChEBI" id="CHEBI:231625"/>
        <dbReference type="EC" id="1.97.1.13"/>
    </reaction>
</comment>
<comment type="catalytic activity">
    <reaction evidence="3">
        <text>an aliphatic sulfonate + 2 oxidized [4Fe-4S]-[ferredoxin] + H2O = 2 reduced [4Fe-4S]-[ferredoxin] + an aldehyde + sulfite + 3 H(+)</text>
        <dbReference type="Rhea" id="RHEA:80647"/>
        <dbReference type="Rhea" id="RHEA-COMP:18797"/>
        <dbReference type="Rhea" id="RHEA-COMP:18798"/>
        <dbReference type="ChEBI" id="CHEBI:15377"/>
        <dbReference type="ChEBI" id="CHEBI:15378"/>
        <dbReference type="ChEBI" id="CHEBI:17359"/>
        <dbReference type="ChEBI" id="CHEBI:17478"/>
        <dbReference type="ChEBI" id="CHEBI:33722"/>
        <dbReference type="ChEBI" id="CHEBI:33723"/>
        <dbReference type="ChEBI" id="CHEBI:231625"/>
    </reaction>
</comment>
<comment type="catalytic activity">
    <reaction evidence="3">
        <text>2 oxidized [4Fe-4S]-[ferredoxin] + an aldehyde + H2O = 2 reduced [4Fe-4S]-[ferredoxin] + a carboxylate + 3 H(+)</text>
        <dbReference type="Rhea" id="RHEA:80651"/>
        <dbReference type="Rhea" id="RHEA-COMP:18797"/>
        <dbReference type="Rhea" id="RHEA-COMP:18798"/>
        <dbReference type="ChEBI" id="CHEBI:15377"/>
        <dbReference type="ChEBI" id="CHEBI:15378"/>
        <dbReference type="ChEBI" id="CHEBI:17478"/>
        <dbReference type="ChEBI" id="CHEBI:29067"/>
        <dbReference type="ChEBI" id="CHEBI:33722"/>
        <dbReference type="ChEBI" id="CHEBI:33723"/>
    </reaction>
</comment>
<comment type="catalytic activity">
    <reaction evidence="3">
        <text>4 oxidized [4Fe-4S]-[ferredoxin] + taurine + 2 H2O = 4 reduced [4Fe-4S]-[ferredoxin] + sulfite + glycine + 6 H(+)</text>
        <dbReference type="Rhea" id="RHEA:80087"/>
        <dbReference type="Rhea" id="RHEA-COMP:18797"/>
        <dbReference type="Rhea" id="RHEA-COMP:18798"/>
        <dbReference type="ChEBI" id="CHEBI:15377"/>
        <dbReference type="ChEBI" id="CHEBI:15378"/>
        <dbReference type="ChEBI" id="CHEBI:17359"/>
        <dbReference type="ChEBI" id="CHEBI:33722"/>
        <dbReference type="ChEBI" id="CHEBI:33723"/>
        <dbReference type="ChEBI" id="CHEBI:57305"/>
        <dbReference type="ChEBI" id="CHEBI:507393"/>
    </reaction>
</comment>
<comment type="catalytic activity">
    <reaction evidence="3">
        <text>2 oxidized [4Fe-4S]-[ferredoxin] + taurine + H2O = aminoacetaldehyde + 2 reduced [4Fe-4S]-[ferredoxin] + sulfite + 3 H(+)</text>
        <dbReference type="Rhea" id="RHEA:80635"/>
        <dbReference type="Rhea" id="RHEA-COMP:18797"/>
        <dbReference type="Rhea" id="RHEA-COMP:18798"/>
        <dbReference type="ChEBI" id="CHEBI:15377"/>
        <dbReference type="ChEBI" id="CHEBI:15378"/>
        <dbReference type="ChEBI" id="CHEBI:17359"/>
        <dbReference type="ChEBI" id="CHEBI:33722"/>
        <dbReference type="ChEBI" id="CHEBI:33723"/>
        <dbReference type="ChEBI" id="CHEBI:58213"/>
        <dbReference type="ChEBI" id="CHEBI:507393"/>
    </reaction>
</comment>
<comment type="catalytic activity">
    <reaction evidence="3">
        <text>aminoacetaldehyde + 2 oxidized [4Fe-4S]-[ferredoxin] + H2O = 2 reduced [4Fe-4S]-[ferredoxin] + glycine + 3 H(+)</text>
        <dbReference type="Rhea" id="RHEA:80639"/>
        <dbReference type="Rhea" id="RHEA-COMP:18797"/>
        <dbReference type="Rhea" id="RHEA-COMP:18798"/>
        <dbReference type="ChEBI" id="CHEBI:15377"/>
        <dbReference type="ChEBI" id="CHEBI:15378"/>
        <dbReference type="ChEBI" id="CHEBI:33722"/>
        <dbReference type="ChEBI" id="CHEBI:33723"/>
        <dbReference type="ChEBI" id="CHEBI:57305"/>
        <dbReference type="ChEBI" id="CHEBI:58213"/>
    </reaction>
</comment>
<comment type="cofactor">
    <cofactor evidence="2 3">
        <name>[4Fe-4S] cluster</name>
        <dbReference type="ChEBI" id="CHEBI:49883"/>
    </cofactor>
    <text evidence="2 3">Binds 1 [4Fe-4S] cluster per subunit (PubMed:16199576, PubMed:36269456). The [4Fe-4S] cluster has three cysteine ligands and one aspartic acid ligand (PubMed:36269456).</text>
</comment>
<comment type="cofactor">
    <cofactor evidence="2 3">
        <name>tungstopterin</name>
        <dbReference type="ChEBI" id="CHEBI:30402"/>
    </cofactor>
    <text evidence="2 3">Binds 1 tungstopterin cofactor per subunit.</text>
</comment>
<comment type="biophysicochemical properties">
    <kinetics>
        <KM evidence="3">0.112 mM for taurine</KM>
        <KM evidence="2">0.18 mM for hexanal</KM>
        <KM evidence="3">0.23 mM for hexanal</KM>
        <KM evidence="2">0.12 mM for hydratropaldehyde</KM>
        <KM evidence="2">0.17 mM for 2-ethylhexanal</KM>
        <KM evidence="2">0.27 mM for 2-methylvaleraldehyde</KM>
        <KM evidence="2">0.42 mM for 3-phenylbutyraldehyde</KM>
        <KM evidence="2">0.43 mM for 2-methylbutyraldehyde</KM>
        <KM evidence="2">0.79 mM for isobutyraldehyde</KM>
        <KM evidence="2">1.3 mM for 2-naphthaldehyde(beta)</KM>
        <KM evidence="2">1.5 mM for acetaldehyde</KM>
        <KM evidence="2">1.6 mM for cinnamaldehyde</KM>
        <KM evidence="3">2.047 mM for propionaldehyde</KM>
        <KM evidence="2">4.8 mM for 2-methoxybenzaldehyde</KM>
        <KM evidence="2">9.4 mM for glutaraldehyde</KM>
        <KM evidence="2">45 mM for formaldehyde</KM>
        <KM evidence="2">46 mM for crotonaldehyde</KM>
        <Vmax evidence="3">14.9 umol/min/mg enzyme with taurine as substrate (with benzyl viologen as electron acceptor)</Vmax>
        <Vmax evidence="2">15.6 umol/min/mg enzyme with hexanal as substrate (with methyl viologen as electron acceptor)</Vmax>
        <Vmax evidence="3">30.0 umol/min/mg enzyme with hexanal as substrate (with benzyl viologen as electron acceptor)</Vmax>
        <Vmax evidence="2">9.3 umol/min/mg enzyme with hydratropaldehyde as substrate (with methyl viologen as electron acceptor)</Vmax>
        <Vmax evidence="2">8.3 umol/min/mg enzyme with 2-ethylhexanal as substrate (with methyl viologen as electron acceptor)</Vmax>
        <Vmax evidence="2">12.7 umol/min/mg enzyme with 2-methylvaleraldehyde as substrate (with methyl viologen as electron acceptor)</Vmax>
        <Vmax evidence="2">8.0 umol/min/mg enzyme with 3-phenylbutyraldehyde as substrate (with methyl viologen as electron acceptor)</Vmax>
        <Vmax evidence="2">7.7 umol/min/mg enzyme with 2-methylbutyraldehyde as substrate (with methyl viologen as electron acceptor)</Vmax>
        <Vmax evidence="2">11.8 umol/min/mg enzyme with isobutyraldehyde as substrate (with methyl viologen as electron acceptor)</Vmax>
        <Vmax evidence="2">7.7 umol/min/mg enzyme with 2-naphthaldehyde(beta) as substrate (with methyl viologen as electron acceptor)</Vmax>
        <Vmax evidence="2">0.34 umol/min/mg enzyme with acetaldehyde as substrate (with methyl viologen as electron acceptor)</Vmax>
        <Vmax evidence="2">7.4 umol/min/mg enzyme with cinnamaldehyde as substrate (with methyl viologen as electron acceptor)</Vmax>
        <Vmax evidence="3">26.2 umol/min/mg enzyme with propionaldehyde as substrate (with benzyl viologen as electron acceptor)</Vmax>
        <Vmax evidence="2">15.1 umol/min/mg enzyme with 2-methoxybenzaldehyde as substrate (with methyl viologen as electron acceptor)</Vmax>
        <Vmax evidence="2">1.4 umol/min/mg enzyme with glutaraldehyde as substrate (with methyl viologen as electron acceptor)</Vmax>
        <Vmax evidence="2">8.5 umol/min/mg enzyme with formaldehyde as substrate (with methyl viologen as electron acceptor)</Vmax>
        <Vmax evidence="2">1.1 umol/min/mg enzyme with crotonaldehyde as substrate (with methyl viologen as electron acceptor)</Vmax>
    </kinetics>
    <temperatureDependence>
        <text evidence="2">Optimum temperature is 80 degrees Celsius for the oxidation of hexanal.</text>
    </temperatureDependence>
</comment>
<comment type="subunit">
    <text evidence="3">Heterodimer composed of a small WOR5-S subunit, with four [4Fe-4S] clusters, and a large WOR5-L subunit, containing the active site tungsto-bispyranopterin cofactor as well as another [4Fe-4S] cluster.</text>
</comment>
<comment type="subcellular location">
    <subcellularLocation>
        <location evidence="3">Cytoplasm</location>
    </subcellularLocation>
</comment>
<comment type="similarity">
    <text evidence="6">Belongs to the AOR/FOR family.</text>
</comment>
<comment type="sequence caution" evidence="6">
    <conflict type="frameshift">
        <sequence resource="EMBL-CDS" id="AAL81604"/>
    </conflict>
</comment>
<name>ASOR_PYRFU</name>
<gene>
    <name evidence="4" type="primary">wor5</name>
    <name evidence="7" type="ordered locus">PF1480</name>
    <name evidence="8" type="ORF">PFDSM3638_07420</name>
</gene>
<accession>E7FHH1</accession>
<accession>A0A5C0XQU4</accession>